<comment type="function">
    <text evidence="4">Light-driven proton pump.</text>
</comment>
<comment type="subunit">
    <text evidence="3 4">Homopentamer (PubMed:32647827, PubMed:34226545). GPR protomers assemble into a pentamer around a central pore with a C5 symmetry axis (PubMed:34226545).</text>
</comment>
<comment type="subcellular location">
    <subcellularLocation>
        <location evidence="1 7">Cell membrane</location>
        <topology evidence="1 7">Multi-pass membrane protein</topology>
    </subcellularLocation>
</comment>
<comment type="PTM">
    <text evidence="4">Contains one covalently linked retinal chromophore per subunit.</text>
</comment>
<comment type="similarity">
    <text evidence="6">Belongs to the archaeal/bacterial/fungal opsin family.</text>
</comment>
<evidence type="ECO:0000255" key="1"/>
<evidence type="ECO:0000255" key="2">
    <source>
        <dbReference type="PIRSR" id="PIRSR038142-1"/>
    </source>
</evidence>
<evidence type="ECO:0000269" key="3">
    <source>
    </source>
</evidence>
<evidence type="ECO:0000269" key="4">
    <source>
    </source>
</evidence>
<evidence type="ECO:0000303" key="5">
    <source>
    </source>
</evidence>
<evidence type="ECO:0000305" key="6"/>
<evidence type="ECO:0000305" key="7">
    <source>
    </source>
</evidence>
<evidence type="ECO:0007744" key="8">
    <source>
        <dbReference type="PDB" id="7B03"/>
    </source>
</evidence>
<evidence type="ECO:0007829" key="9">
    <source>
        <dbReference type="PDB" id="7B03"/>
    </source>
</evidence>
<evidence type="ECO:0007829" key="10">
    <source>
        <dbReference type="PDB" id="8CQC"/>
    </source>
</evidence>
<dbReference type="EMBL" id="AY601905">
    <property type="protein sequence ID" value="AAT12291.1"/>
    <property type="molecule type" value="Genomic_DNA"/>
</dbReference>
<dbReference type="PDB" id="7B03">
    <property type="method" value="EM"/>
    <property type="resolution" value="2.93 A"/>
    <property type="chains" value="A/B/C/D/E=19-250"/>
</dbReference>
<dbReference type="PDB" id="8CNK">
    <property type="method" value="EM"/>
    <property type="resolution" value="2.97 A"/>
    <property type="chains" value="A/B/C/D/E=19-250"/>
</dbReference>
<dbReference type="PDB" id="8CQC">
    <property type="method" value="EM"/>
    <property type="resolution" value="2.82 A"/>
    <property type="chains" value="A/B/C/D/E=1-250"/>
</dbReference>
<dbReference type="PDB" id="8CQD">
    <property type="method" value="EM"/>
    <property type="resolution" value="3.54 A"/>
    <property type="chains" value="A/B/C/D/E/F=1-250"/>
</dbReference>
<dbReference type="PDBsum" id="7B03"/>
<dbReference type="PDBsum" id="8CNK"/>
<dbReference type="PDBsum" id="8CQC"/>
<dbReference type="PDBsum" id="8CQD"/>
<dbReference type="EMDB" id="EMD-11955"/>
<dbReference type="EMDB" id="EMD-16759"/>
<dbReference type="EMDB" id="EMD-16795"/>
<dbReference type="EMDB" id="EMD-16796"/>
<dbReference type="SMR" id="Q6J4G7"/>
<dbReference type="GO" id="GO:0005886">
    <property type="term" value="C:plasma membrane"/>
    <property type="evidence" value="ECO:0007669"/>
    <property type="project" value="UniProtKB-SubCell"/>
</dbReference>
<dbReference type="GO" id="GO:0010461">
    <property type="term" value="F:light-activated monoatomic ion channel activity"/>
    <property type="evidence" value="ECO:0007669"/>
    <property type="project" value="InterPro"/>
</dbReference>
<dbReference type="GO" id="GO:0009881">
    <property type="term" value="F:photoreceptor activity"/>
    <property type="evidence" value="ECO:0007669"/>
    <property type="project" value="UniProtKB-KW"/>
</dbReference>
<dbReference type="GO" id="GO:0007602">
    <property type="term" value="P:phototransduction"/>
    <property type="evidence" value="ECO:0007669"/>
    <property type="project" value="UniProtKB-KW"/>
</dbReference>
<dbReference type="CDD" id="cd15242">
    <property type="entry name" value="7tm_Proteorhodopsin"/>
    <property type="match status" value="1"/>
</dbReference>
<dbReference type="Gene3D" id="1.20.1070.10">
    <property type="entry name" value="Rhodopsin 7-helix transmembrane proteins"/>
    <property type="match status" value="1"/>
</dbReference>
<dbReference type="InterPro" id="IPR001425">
    <property type="entry name" value="Arc/bac/fun_rhodopsins"/>
</dbReference>
<dbReference type="InterPro" id="IPR017402">
    <property type="entry name" value="Proteorhodopsin"/>
</dbReference>
<dbReference type="InterPro" id="IPR018229">
    <property type="entry name" value="Rhodopsin_retinal_BS"/>
</dbReference>
<dbReference type="PANTHER" id="PTHR28286">
    <property type="match status" value="1"/>
</dbReference>
<dbReference type="PANTHER" id="PTHR28286:SF2">
    <property type="entry name" value="BACTERIORHODOPSIN _OPSIN, NOPA (EUROFUNG)"/>
    <property type="match status" value="1"/>
</dbReference>
<dbReference type="Pfam" id="PF01036">
    <property type="entry name" value="Bac_rhodopsin"/>
    <property type="match status" value="1"/>
</dbReference>
<dbReference type="PIRSF" id="PIRSF038142">
    <property type="entry name" value="Rhodopsin_bac_prd"/>
    <property type="match status" value="1"/>
</dbReference>
<dbReference type="SMART" id="SM01021">
    <property type="entry name" value="Bac_rhodopsin"/>
    <property type="match status" value="1"/>
</dbReference>
<dbReference type="SUPFAM" id="SSF81321">
    <property type="entry name" value="Family A G protein-coupled receptor-like"/>
    <property type="match status" value="1"/>
</dbReference>
<dbReference type="PROSITE" id="PS00950">
    <property type="entry name" value="BACTERIAL_OPSIN_1"/>
    <property type="match status" value="1"/>
</dbReference>
<keyword id="KW-0002">3D-structure</keyword>
<keyword id="KW-1003">Cell membrane</keyword>
<keyword id="KW-0157">Chromophore</keyword>
<keyword id="KW-0472">Membrane</keyword>
<keyword id="KW-0600">Photoreceptor protein</keyword>
<keyword id="KW-0675">Receptor</keyword>
<keyword id="KW-0681">Retinal protein</keyword>
<keyword id="KW-0716">Sensory transduction</keyword>
<keyword id="KW-0732">Signal</keyword>
<keyword id="KW-0812">Transmembrane</keyword>
<keyword id="KW-1133">Transmembrane helix</keyword>
<keyword id="KW-0813">Transport</keyword>
<accession>Q6J4G7</accession>
<reference key="1">
    <citation type="journal article" date="2004" name="Proc. Natl. Acad. Sci. U.S.A.">
        <title>Darwinian adaptation of proteorhodopsin to different light intensities in the marine environment.</title>
        <authorList>
            <person name="Bielawski J.P."/>
            <person name="Dunn K.A."/>
            <person name="Sabehi G."/>
            <person name="Beja O."/>
        </authorList>
    </citation>
    <scope>NUCLEOTIDE SEQUENCE [GENOMIC DNA]</scope>
</reference>
<reference key="2">
    <citation type="journal article" date="2020" name="J. Struct. Biol.">
        <title>Cryo-electron microscopic and X-ray crystallographic analysis of the light-driven proton pump proteorhodopsin reveals a pentameric assembly.</title>
        <authorList>
            <person name="Hirschi S."/>
            <person name="Kalbermatter D."/>
            <person name="Ucurum Z."/>
            <person name="Fotiadis D."/>
        </authorList>
    </citation>
    <scope>SUBUNIT</scope>
</reference>
<reference evidence="8" key="3">
    <citation type="journal article" date="2021" name="Nat. Commun.">
        <title>Cryo-EM structure and dynamics of the green-light absorbing proteorhodopsin.</title>
        <authorList>
            <person name="Hirschi S."/>
            <person name="Kalbermatter D."/>
            <person name="Ucurum Z."/>
            <person name="Lemmin T."/>
            <person name="Fotiadis D."/>
        </authorList>
    </citation>
    <scope>STRUCTURE BY ELECTRON MICROSCOPY (2.93 ANGSTROMS) OF 19-250 IN COVALENT COMPLEX WITH RETINAL</scope>
    <scope>FUNCTION</scope>
    <scope>SUBUNIT</scope>
    <scope>PTM</scope>
    <scope>SUBCELLULAR LOCATION</scope>
    <scope>MUTAGENESIS OF LYS-58; TRP-59; TYR-96; GLU-143; SER-180; TYR-209; TYR-224 AND GLU-246</scope>
</reference>
<feature type="signal peptide" evidence="1">
    <location>
        <begin position="1"/>
        <end position="18"/>
    </location>
</feature>
<feature type="chain" id="PRO_5004274813" description="Green-light absorbing proteorhodopsin">
    <location>
        <begin position="19"/>
        <end position="250"/>
    </location>
</feature>
<feature type="topological domain" description="Extracellular" evidence="7">
    <location>
        <begin position="19"/>
        <end position="29"/>
    </location>
</feature>
<feature type="transmembrane region" description="Helical" evidence="4">
    <location>
        <begin position="30"/>
        <end position="53"/>
    </location>
</feature>
<feature type="topological domain" description="Cytoplasmic" evidence="7">
    <location>
        <begin position="54"/>
        <end position="58"/>
    </location>
</feature>
<feature type="transmembrane region" description="Helical" evidence="4">
    <location>
        <begin position="59"/>
        <end position="87"/>
    </location>
</feature>
<feature type="topological domain" description="Extracellular" evidence="7">
    <location>
        <begin position="88"/>
        <end position="90"/>
    </location>
</feature>
<feature type="transmembrane region" description="Helical" evidence="4">
    <location>
        <begin position="91"/>
        <end position="118"/>
    </location>
</feature>
<feature type="topological domain" description="Cytoplasmic" evidence="7">
    <location>
        <begin position="119"/>
        <end position="121"/>
    </location>
</feature>
<feature type="transmembrane region" description="Helical" evidence="4">
    <location>
        <begin position="122"/>
        <end position="144"/>
    </location>
</feature>
<feature type="topological domain" description="Extracellular" evidence="7">
    <location>
        <begin position="145"/>
        <end position="147"/>
    </location>
</feature>
<feature type="transmembrane region" description="Helical" evidence="4">
    <location>
        <begin position="148"/>
        <end position="177"/>
    </location>
</feature>
<feature type="topological domain" description="Cytoplasmic" evidence="7">
    <location>
        <begin position="178"/>
        <end position="180"/>
    </location>
</feature>
<feature type="transmembrane region" description="Helical" evidence="4">
    <location>
        <begin position="181"/>
        <end position="208"/>
    </location>
</feature>
<feature type="topological domain" description="Extracellular" evidence="7">
    <location>
        <begin position="209"/>
        <end position="218"/>
    </location>
</feature>
<feature type="transmembrane region" description="Helical" evidence="4">
    <location>
        <begin position="219"/>
        <end position="249"/>
    </location>
</feature>
<feature type="topological domain" description="Cytoplasmic" evidence="7">
    <location>
        <position position="250"/>
    </location>
</feature>
<feature type="site" description="Primary proton acceptor" evidence="2 7">
    <location>
        <position position="98"/>
    </location>
</feature>
<feature type="site" description="Responsible for spectral tuning" evidence="2">
    <location>
        <position position="106"/>
    </location>
</feature>
<feature type="site" description="Primary proton donor" evidence="2 7">
    <location>
        <position position="109"/>
    </location>
</feature>
<feature type="site" description="Proton release group" evidence="7">
    <location>
        <position position="143"/>
    </location>
</feature>
<feature type="modified residue" description="N6-(retinylidene)lysine" evidence="4 8">
    <location>
        <position position="232"/>
    </location>
</feature>
<feature type="mutagenesis site" description="Reduced GPR photoactivity by about 30%." evidence="4">
    <original>K</original>
    <variation>A</variation>
    <location>
        <position position="58"/>
    </location>
</feature>
<feature type="mutagenesis site" description="Reduced GPR photoactivity by about 50%." evidence="4">
    <original>W</original>
    <variation>A</variation>
    <location>
        <position position="59"/>
    </location>
</feature>
<feature type="mutagenesis site" description="Reduced GPR photoactivity by about 50%." evidence="4">
    <original>Y</original>
    <variation>F</variation>
    <location>
        <position position="96"/>
    </location>
</feature>
<feature type="mutagenesis site" description="Reduced GPR photoactivity by about 50%." evidence="4">
    <original>E</original>
    <variation>A</variation>
    <location>
        <position position="143"/>
    </location>
</feature>
<feature type="mutagenesis site" description="Increased GPR photoactivity." evidence="4">
    <original>S</original>
    <variation>A</variation>
    <location>
        <position position="180"/>
    </location>
</feature>
<feature type="mutagenesis site" description="Reduced GPR photoactivity by about 50%." evidence="4">
    <original>Y</original>
    <variation>F</variation>
    <location>
        <position position="209"/>
    </location>
</feature>
<feature type="mutagenesis site" description="Reduced GPR photoactivity by about 50%." evidence="4">
    <original>Y</original>
    <variation>F</variation>
    <location>
        <position position="224"/>
    </location>
</feature>
<feature type="mutagenesis site" description="Increased GPR photoactivity." evidence="4">
    <original>E</original>
    <variation>A</variation>
    <location>
        <position position="246"/>
    </location>
</feature>
<feature type="strand" evidence="9">
    <location>
        <begin position="27"/>
        <end position="30"/>
    </location>
</feature>
<feature type="helix" evidence="10">
    <location>
        <begin position="31"/>
        <end position="50"/>
    </location>
</feature>
<feature type="helix" evidence="10">
    <location>
        <begin position="51"/>
        <end position="53"/>
    </location>
</feature>
<feature type="helix" evidence="10">
    <location>
        <begin position="57"/>
        <end position="86"/>
    </location>
</feature>
<feature type="helix" evidence="10">
    <location>
        <begin position="92"/>
        <end position="117"/>
    </location>
</feature>
<feature type="helix" evidence="10">
    <location>
        <begin position="123"/>
        <end position="143"/>
    </location>
</feature>
<feature type="helix" evidence="10">
    <location>
        <begin position="149"/>
        <end position="168"/>
    </location>
</feature>
<feature type="helix" evidence="10">
    <location>
        <begin position="171"/>
        <end position="176"/>
    </location>
</feature>
<feature type="helix" evidence="10">
    <location>
        <begin position="181"/>
        <end position="196"/>
    </location>
</feature>
<feature type="turn" evidence="10">
    <location>
        <begin position="197"/>
        <end position="199"/>
    </location>
</feature>
<feature type="helix" evidence="10">
    <location>
        <begin position="200"/>
        <end position="208"/>
    </location>
</feature>
<feature type="helix" evidence="10">
    <location>
        <begin position="220"/>
        <end position="248"/>
    </location>
</feature>
<organism>
    <name type="scientific">Unknown prokaryotic organism</name>
    <dbReference type="NCBI Taxonomy" id="2725"/>
    <lineage>
        <taxon>Bacteria</taxon>
        <taxon>environmental samples</taxon>
    </lineage>
</organism>
<sequence length="250" mass="27308">MGKLLLILGSVIALPTFAAGGGDLDASDYTGVSFWLVTAALLASTVFFFVERDRVSAKWKTSLTVSGLVTGIAFWHYMYMRGVWIETGDSPTVFRYIDWLLTVPLLICEFYLILAAATNVAGSLFKKLLVGSLVMLVFGYMGEAGIMAAWPAFIIGCLAWVYMIYELWAGEGKSACNTASPAVQSAYNTMMYIIIFGWAIYPVGYFTGYLMGDGGSALNLNLIYNLADFVNKILFGLIIWNVAVKESSNA</sequence>
<protein>
    <recommendedName>
        <fullName evidence="5">Green-light absorbing proteorhodopsin</fullName>
        <shortName evidence="5">GPR</shortName>
    </recommendedName>
</protein>
<name>PRRG_UNKP</name>
<proteinExistence type="evidence at protein level"/>